<accession>B2TIN7</accession>
<reference key="1">
    <citation type="submission" date="2008-04" db="EMBL/GenBank/DDBJ databases">
        <title>Complete sequence of Clostridium botulinum strain Eklund.</title>
        <authorList>
            <person name="Brinkac L.M."/>
            <person name="Brown J.L."/>
            <person name="Bruce D."/>
            <person name="Detter C."/>
            <person name="Munk C."/>
            <person name="Smith L.A."/>
            <person name="Smith T.J."/>
            <person name="Sutton G."/>
            <person name="Brettin T.S."/>
        </authorList>
    </citation>
    <scope>NUCLEOTIDE SEQUENCE [LARGE SCALE GENOMIC DNA]</scope>
    <source>
        <strain>Eklund 17B / Type B</strain>
    </source>
</reference>
<feature type="chain" id="PRO_1000201076" description="Phosphoglucosamine mutase">
    <location>
        <begin position="1"/>
        <end position="447"/>
    </location>
</feature>
<feature type="active site" description="Phosphoserine intermediate" evidence="1">
    <location>
        <position position="100"/>
    </location>
</feature>
<feature type="binding site" description="via phosphate group" evidence="1">
    <location>
        <position position="100"/>
    </location>
    <ligand>
        <name>Mg(2+)</name>
        <dbReference type="ChEBI" id="CHEBI:18420"/>
    </ligand>
</feature>
<feature type="binding site" evidence="1">
    <location>
        <position position="240"/>
    </location>
    <ligand>
        <name>Mg(2+)</name>
        <dbReference type="ChEBI" id="CHEBI:18420"/>
    </ligand>
</feature>
<feature type="binding site" evidence="1">
    <location>
        <position position="242"/>
    </location>
    <ligand>
        <name>Mg(2+)</name>
        <dbReference type="ChEBI" id="CHEBI:18420"/>
    </ligand>
</feature>
<feature type="binding site" evidence="1">
    <location>
        <position position="244"/>
    </location>
    <ligand>
        <name>Mg(2+)</name>
        <dbReference type="ChEBI" id="CHEBI:18420"/>
    </ligand>
</feature>
<feature type="modified residue" description="Phosphoserine" evidence="1">
    <location>
        <position position="100"/>
    </location>
</feature>
<dbReference type="EC" id="5.4.2.10" evidence="1"/>
<dbReference type="EMBL" id="CP001056">
    <property type="protein sequence ID" value="ACD21783.1"/>
    <property type="molecule type" value="Genomic_DNA"/>
</dbReference>
<dbReference type="SMR" id="B2TIN7"/>
<dbReference type="KEGG" id="cbk:CLL_A0300"/>
<dbReference type="PATRIC" id="fig|935198.13.peg.275"/>
<dbReference type="HOGENOM" id="CLU_016950_7_0_9"/>
<dbReference type="Proteomes" id="UP000001195">
    <property type="component" value="Chromosome"/>
</dbReference>
<dbReference type="GO" id="GO:0005829">
    <property type="term" value="C:cytosol"/>
    <property type="evidence" value="ECO:0007669"/>
    <property type="project" value="TreeGrafter"/>
</dbReference>
<dbReference type="GO" id="GO:0000287">
    <property type="term" value="F:magnesium ion binding"/>
    <property type="evidence" value="ECO:0007669"/>
    <property type="project" value="UniProtKB-UniRule"/>
</dbReference>
<dbReference type="GO" id="GO:0008966">
    <property type="term" value="F:phosphoglucosamine mutase activity"/>
    <property type="evidence" value="ECO:0007669"/>
    <property type="project" value="UniProtKB-UniRule"/>
</dbReference>
<dbReference type="GO" id="GO:0004615">
    <property type="term" value="F:phosphomannomutase activity"/>
    <property type="evidence" value="ECO:0007669"/>
    <property type="project" value="TreeGrafter"/>
</dbReference>
<dbReference type="GO" id="GO:0005975">
    <property type="term" value="P:carbohydrate metabolic process"/>
    <property type="evidence" value="ECO:0007669"/>
    <property type="project" value="InterPro"/>
</dbReference>
<dbReference type="GO" id="GO:0009252">
    <property type="term" value="P:peptidoglycan biosynthetic process"/>
    <property type="evidence" value="ECO:0007669"/>
    <property type="project" value="TreeGrafter"/>
</dbReference>
<dbReference type="GO" id="GO:0006048">
    <property type="term" value="P:UDP-N-acetylglucosamine biosynthetic process"/>
    <property type="evidence" value="ECO:0007669"/>
    <property type="project" value="TreeGrafter"/>
</dbReference>
<dbReference type="CDD" id="cd05802">
    <property type="entry name" value="GlmM"/>
    <property type="match status" value="1"/>
</dbReference>
<dbReference type="FunFam" id="3.30.310.50:FF:000001">
    <property type="entry name" value="Phosphoglucosamine mutase"/>
    <property type="match status" value="1"/>
</dbReference>
<dbReference type="FunFam" id="3.40.120.10:FF:000001">
    <property type="entry name" value="Phosphoglucosamine mutase"/>
    <property type="match status" value="1"/>
</dbReference>
<dbReference type="FunFam" id="3.40.120.10:FF:000003">
    <property type="entry name" value="Phosphoglucosamine mutase"/>
    <property type="match status" value="1"/>
</dbReference>
<dbReference type="Gene3D" id="3.40.120.10">
    <property type="entry name" value="Alpha-D-Glucose-1,6-Bisphosphate, subunit A, domain 3"/>
    <property type="match status" value="3"/>
</dbReference>
<dbReference type="Gene3D" id="3.30.310.50">
    <property type="entry name" value="Alpha-D-phosphohexomutase, C-terminal domain"/>
    <property type="match status" value="1"/>
</dbReference>
<dbReference type="HAMAP" id="MF_01554_B">
    <property type="entry name" value="GlmM_B"/>
    <property type="match status" value="1"/>
</dbReference>
<dbReference type="InterPro" id="IPR005844">
    <property type="entry name" value="A-D-PHexomutase_a/b/a-I"/>
</dbReference>
<dbReference type="InterPro" id="IPR016055">
    <property type="entry name" value="A-D-PHexomutase_a/b/a-I/II/III"/>
</dbReference>
<dbReference type="InterPro" id="IPR005845">
    <property type="entry name" value="A-D-PHexomutase_a/b/a-II"/>
</dbReference>
<dbReference type="InterPro" id="IPR005846">
    <property type="entry name" value="A-D-PHexomutase_a/b/a-III"/>
</dbReference>
<dbReference type="InterPro" id="IPR005843">
    <property type="entry name" value="A-D-PHexomutase_C"/>
</dbReference>
<dbReference type="InterPro" id="IPR036900">
    <property type="entry name" value="A-D-PHexomutase_C_sf"/>
</dbReference>
<dbReference type="InterPro" id="IPR016066">
    <property type="entry name" value="A-D-PHexomutase_CS"/>
</dbReference>
<dbReference type="InterPro" id="IPR005841">
    <property type="entry name" value="Alpha-D-phosphohexomutase_SF"/>
</dbReference>
<dbReference type="InterPro" id="IPR006352">
    <property type="entry name" value="GlmM_bact"/>
</dbReference>
<dbReference type="InterPro" id="IPR050060">
    <property type="entry name" value="Phosphoglucosamine_mutase"/>
</dbReference>
<dbReference type="NCBIfam" id="TIGR01455">
    <property type="entry name" value="glmM"/>
    <property type="match status" value="1"/>
</dbReference>
<dbReference type="NCBIfam" id="NF008139">
    <property type="entry name" value="PRK10887.1"/>
    <property type="match status" value="1"/>
</dbReference>
<dbReference type="PANTHER" id="PTHR42946:SF1">
    <property type="entry name" value="PHOSPHOGLUCOMUTASE (ALPHA-D-GLUCOSE-1,6-BISPHOSPHATE-DEPENDENT)"/>
    <property type="match status" value="1"/>
</dbReference>
<dbReference type="PANTHER" id="PTHR42946">
    <property type="entry name" value="PHOSPHOHEXOSE MUTASE"/>
    <property type="match status" value="1"/>
</dbReference>
<dbReference type="Pfam" id="PF02878">
    <property type="entry name" value="PGM_PMM_I"/>
    <property type="match status" value="1"/>
</dbReference>
<dbReference type="Pfam" id="PF02879">
    <property type="entry name" value="PGM_PMM_II"/>
    <property type="match status" value="1"/>
</dbReference>
<dbReference type="Pfam" id="PF02880">
    <property type="entry name" value="PGM_PMM_III"/>
    <property type="match status" value="1"/>
</dbReference>
<dbReference type="Pfam" id="PF00408">
    <property type="entry name" value="PGM_PMM_IV"/>
    <property type="match status" value="1"/>
</dbReference>
<dbReference type="PRINTS" id="PR00509">
    <property type="entry name" value="PGMPMM"/>
</dbReference>
<dbReference type="SUPFAM" id="SSF55957">
    <property type="entry name" value="Phosphoglucomutase, C-terminal domain"/>
    <property type="match status" value="1"/>
</dbReference>
<dbReference type="SUPFAM" id="SSF53738">
    <property type="entry name" value="Phosphoglucomutase, first 3 domains"/>
    <property type="match status" value="3"/>
</dbReference>
<dbReference type="PROSITE" id="PS00710">
    <property type="entry name" value="PGM_PMM"/>
    <property type="match status" value="1"/>
</dbReference>
<organism>
    <name type="scientific">Clostridium botulinum (strain Eklund 17B / Type B)</name>
    <dbReference type="NCBI Taxonomy" id="935198"/>
    <lineage>
        <taxon>Bacteria</taxon>
        <taxon>Bacillati</taxon>
        <taxon>Bacillota</taxon>
        <taxon>Clostridia</taxon>
        <taxon>Eubacteriales</taxon>
        <taxon>Clostridiaceae</taxon>
        <taxon>Clostridium</taxon>
    </lineage>
</organism>
<evidence type="ECO:0000255" key="1">
    <source>
        <dbReference type="HAMAP-Rule" id="MF_01554"/>
    </source>
</evidence>
<comment type="function">
    <text evidence="1">Catalyzes the conversion of glucosamine-6-phosphate to glucosamine-1-phosphate.</text>
</comment>
<comment type="catalytic activity">
    <reaction evidence="1">
        <text>alpha-D-glucosamine 1-phosphate = D-glucosamine 6-phosphate</text>
        <dbReference type="Rhea" id="RHEA:23424"/>
        <dbReference type="ChEBI" id="CHEBI:58516"/>
        <dbReference type="ChEBI" id="CHEBI:58725"/>
        <dbReference type="EC" id="5.4.2.10"/>
    </reaction>
</comment>
<comment type="cofactor">
    <cofactor evidence="1">
        <name>Mg(2+)</name>
        <dbReference type="ChEBI" id="CHEBI:18420"/>
    </cofactor>
    <text evidence="1">Binds 1 Mg(2+) ion per subunit.</text>
</comment>
<comment type="PTM">
    <text evidence="1">Activated by phosphorylation.</text>
</comment>
<comment type="similarity">
    <text evidence="1">Belongs to the phosphohexose mutase family.</text>
</comment>
<keyword id="KW-0413">Isomerase</keyword>
<keyword id="KW-0460">Magnesium</keyword>
<keyword id="KW-0479">Metal-binding</keyword>
<keyword id="KW-0597">Phosphoprotein</keyword>
<protein>
    <recommendedName>
        <fullName evidence="1">Phosphoglucosamine mutase</fullName>
        <ecNumber evidence="1">5.4.2.10</ecNumber>
    </recommendedName>
</protein>
<sequence>MDRMFGTDGVRGIANTELTAQIAYNLGRAGAYVLTEGAHKPKILVAKDTRISGDMLESALVAGILSVGAEAVILGVVPTPAVAYLTREYNADAGVMISASHNPVEYNGIKFFNNKGYKLSDELEDGIQKVIESDFEGVPSPIGIDLGRERIEVAALEDYTEFAKQTIPYNLKGMKIALDCANGASYKSAVKAFRDLGADVFVINDNPDGTNINKNCGSTHPEELMDYVVKKGCDLGFAFDGDADRCLAVDENGKLINGDFILMLCANYLKEIGKLKDDTLVVTVMSNLGLDIACRGFGIKLEKTKVGDRYVLEEMTKDNYVLGGEQSGHVIFLDYNTTGDGLVTALQVASIVKKKEKTLSELCSVMKELPQVLVNATVPNDKKNIYLEDTEIVEAIKEIEAKLNGVGRVLIRPSGTEPLVRVMLEGENQAEIDEMAHGLANLILSKI</sequence>
<name>GLMM_CLOBB</name>
<proteinExistence type="inferred from homology"/>
<gene>
    <name evidence="1" type="primary">glmM</name>
    <name type="ordered locus">CLL_A0300</name>
</gene>